<name>SCXB_BUTOC</name>
<evidence type="ECO:0000255" key="1">
    <source>
        <dbReference type="PROSITE-ProRule" id="PRU01210"/>
    </source>
</evidence>
<evidence type="ECO:0000305" key="2"/>
<comment type="function">
    <text>Alpha toxins bind voltage-independently at site-3 of sodium channels (Nav) and inhibit the inactivation of the activated channels, thereby blocking neuronal transmission.</text>
</comment>
<comment type="subcellular location">
    <subcellularLocation>
        <location>Secreted</location>
    </subcellularLocation>
</comment>
<comment type="tissue specificity">
    <text>Expressed by the venom gland.</text>
</comment>
<comment type="domain">
    <text evidence="2">Has the structural arrangement of an alpha-helix connected to antiparallel beta-sheets by disulfide bonds (CS-alpha/beta).</text>
</comment>
<comment type="similarity">
    <text evidence="2">Belongs to the long (4 C-C) scorpion toxin superfamily. Sodium channel inhibitor family. Alpha subfamily.</text>
</comment>
<feature type="chain" id="PRO_0000066738" description="Alpha-toxin Bot11">
    <location>
        <begin position="1"/>
        <end position="65"/>
    </location>
</feature>
<feature type="domain" description="LCN-type CS-alpha/beta" evidence="1">
    <location>
        <begin position="2"/>
        <end position="64"/>
    </location>
</feature>
<feature type="disulfide bond" evidence="1">
    <location>
        <begin position="12"/>
        <end position="63"/>
    </location>
</feature>
<feature type="disulfide bond" evidence="1">
    <location>
        <begin position="16"/>
        <end position="36"/>
    </location>
</feature>
<feature type="disulfide bond" evidence="1">
    <location>
        <begin position="22"/>
        <end position="46"/>
    </location>
</feature>
<feature type="disulfide bond" evidence="1">
    <location>
        <begin position="26"/>
        <end position="48"/>
    </location>
</feature>
<proteinExistence type="evidence at protein level"/>
<keyword id="KW-0903">Direct protein sequencing</keyword>
<keyword id="KW-1015">Disulfide bond</keyword>
<keyword id="KW-0872">Ion channel impairing toxin</keyword>
<keyword id="KW-0528">Neurotoxin</keyword>
<keyword id="KW-0964">Secreted</keyword>
<keyword id="KW-0800">Toxin</keyword>
<keyword id="KW-0738">Voltage-gated sodium channel impairing toxin</keyword>
<accession>P01486</accession>
<reference key="1">
    <citation type="journal article" date="1984" name="Toxicon">
        <title>Purification of thirteen toxins active on mice from the venom of the North African scorpion Buthus occitanus tunetanus.</title>
        <authorList>
            <person name="Martin M.-F."/>
            <person name="Rochat H."/>
        </authorList>
    </citation>
    <scope>PROTEIN SEQUENCE</scope>
    <source>
        <tissue>Venom</tissue>
    </source>
</reference>
<reference key="2">
    <citation type="journal article" date="1987" name="Int. J. Pept. Protein Res.">
        <title>Amino acid sequence of toxin XI of the scorpion Buthus occitanus tunetanus. Evidence of a mutation having an important effect upon neurotoxic activity.</title>
        <authorList>
            <person name="Sampieri F."/>
            <person name="Habersetzer-Rochat C."/>
            <person name="Martin M.-F."/>
            <person name="Kopeyan C."/>
            <person name="Rochat H."/>
        </authorList>
    </citation>
    <scope>PROTEIN SEQUENCE</scope>
</reference>
<protein>
    <recommendedName>
        <fullName>Alpha-toxin Bot11</fullName>
    </recommendedName>
    <alternativeName>
        <fullName>BotXI</fullName>
    </alternativeName>
    <alternativeName>
        <fullName>Neurotoxin 11</fullName>
    </alternativeName>
    <alternativeName>
        <fullName>Toxin XI</fullName>
    </alternativeName>
</protein>
<organism>
    <name type="scientific">Buthus occitanus tunetanus</name>
    <name type="common">Common European scorpion</name>
    <name type="synonym">Buthus tunetanus</name>
    <dbReference type="NCBI Taxonomy" id="6871"/>
    <lineage>
        <taxon>Eukaryota</taxon>
        <taxon>Metazoa</taxon>
        <taxon>Ecdysozoa</taxon>
        <taxon>Arthropoda</taxon>
        <taxon>Chelicerata</taxon>
        <taxon>Arachnida</taxon>
        <taxon>Scorpiones</taxon>
        <taxon>Buthida</taxon>
        <taxon>Buthoidea</taxon>
        <taxon>Buthidae</taxon>
        <taxon>Buthus</taxon>
    </lineage>
</organism>
<dbReference type="PIR" id="A01746">
    <property type="entry name" value="NTSREB"/>
</dbReference>
<dbReference type="SMR" id="P01486"/>
<dbReference type="GO" id="GO:0005576">
    <property type="term" value="C:extracellular region"/>
    <property type="evidence" value="ECO:0007669"/>
    <property type="project" value="UniProtKB-SubCell"/>
</dbReference>
<dbReference type="GO" id="GO:0019871">
    <property type="term" value="F:sodium channel inhibitor activity"/>
    <property type="evidence" value="ECO:0007669"/>
    <property type="project" value="InterPro"/>
</dbReference>
<dbReference type="GO" id="GO:0090729">
    <property type="term" value="F:toxin activity"/>
    <property type="evidence" value="ECO:0007669"/>
    <property type="project" value="UniProtKB-KW"/>
</dbReference>
<dbReference type="GO" id="GO:0006952">
    <property type="term" value="P:defense response"/>
    <property type="evidence" value="ECO:0007669"/>
    <property type="project" value="InterPro"/>
</dbReference>
<dbReference type="CDD" id="cd23106">
    <property type="entry name" value="neurotoxins_LC_scorpion"/>
    <property type="match status" value="1"/>
</dbReference>
<dbReference type="Gene3D" id="3.30.30.10">
    <property type="entry name" value="Knottin, scorpion toxin-like"/>
    <property type="match status" value="1"/>
</dbReference>
<dbReference type="InterPro" id="IPR044062">
    <property type="entry name" value="LCN-type_CS_alpha_beta_dom"/>
</dbReference>
<dbReference type="InterPro" id="IPR003614">
    <property type="entry name" value="Scorpion_toxin-like"/>
</dbReference>
<dbReference type="InterPro" id="IPR036574">
    <property type="entry name" value="Scorpion_toxin-like_sf"/>
</dbReference>
<dbReference type="InterPro" id="IPR018218">
    <property type="entry name" value="Scorpion_toxinL"/>
</dbReference>
<dbReference type="InterPro" id="IPR002061">
    <property type="entry name" value="Scorpion_toxinL/defensin"/>
</dbReference>
<dbReference type="Pfam" id="PF00537">
    <property type="entry name" value="Toxin_3"/>
    <property type="match status" value="1"/>
</dbReference>
<dbReference type="PRINTS" id="PR00285">
    <property type="entry name" value="SCORPNTOXIN"/>
</dbReference>
<dbReference type="PRINTS" id="PR00284">
    <property type="entry name" value="TOXIN"/>
</dbReference>
<dbReference type="SMART" id="SM00505">
    <property type="entry name" value="Knot1"/>
    <property type="match status" value="1"/>
</dbReference>
<dbReference type="SUPFAM" id="SSF57095">
    <property type="entry name" value="Scorpion toxin-like"/>
    <property type="match status" value="1"/>
</dbReference>
<dbReference type="PROSITE" id="PS51863">
    <property type="entry name" value="LCN_CSAB"/>
    <property type="match status" value="1"/>
</dbReference>
<sequence length="65" mass="7468">LKDGYIVDDRNCTYFCGTNAYCNEECVKLKGESGYCQWVGRYGNACWCYKLPDHVRTVQAGRCRS</sequence>